<reference key="1">
    <citation type="submission" date="2004-11" db="EMBL/GenBank/DDBJ databases">
        <authorList>
            <consortium name="The German cDNA consortium"/>
        </authorList>
    </citation>
    <scope>NUCLEOTIDE SEQUENCE [LARGE SCALE MRNA]</scope>
    <source>
        <tissue>Heart</tissue>
    </source>
</reference>
<evidence type="ECO:0000250" key="1">
    <source>
        <dbReference type="UniProtKB" id="Q8N5C7"/>
    </source>
</evidence>
<evidence type="ECO:0000305" key="2"/>
<organism>
    <name type="scientific">Pongo abelii</name>
    <name type="common">Sumatran orangutan</name>
    <name type="synonym">Pongo pygmaeus abelii</name>
    <dbReference type="NCBI Taxonomy" id="9601"/>
    <lineage>
        <taxon>Eukaryota</taxon>
        <taxon>Metazoa</taxon>
        <taxon>Chordata</taxon>
        <taxon>Craniata</taxon>
        <taxon>Vertebrata</taxon>
        <taxon>Euteleostomi</taxon>
        <taxon>Mammalia</taxon>
        <taxon>Eutheria</taxon>
        <taxon>Euarchontoglires</taxon>
        <taxon>Primates</taxon>
        <taxon>Haplorrhini</taxon>
        <taxon>Catarrhini</taxon>
        <taxon>Hominidae</taxon>
        <taxon>Pongo</taxon>
    </lineage>
</organism>
<name>DTWD1_PONAB</name>
<comment type="function">
    <text evidence="1">Catalyzes the formation of 3-(3-amino-3-carboxypropyl)uridine (acp3U) at position 20 in the D-loop of several cytoplasmic tRNAs (acp3U(20)).</text>
</comment>
<comment type="catalytic activity">
    <reaction evidence="1">
        <text>a uridine in tRNA + S-adenosyl-L-methionine = a 3-[(3S)-3-amino-3-carboxypropyl]uridine in tRNA + S-methyl-5'-thioadenosine + H(+)</text>
        <dbReference type="Rhea" id="RHEA:62432"/>
        <dbReference type="Rhea" id="RHEA-COMP:13339"/>
        <dbReference type="Rhea" id="RHEA-COMP:16092"/>
        <dbReference type="ChEBI" id="CHEBI:15378"/>
        <dbReference type="ChEBI" id="CHEBI:17509"/>
        <dbReference type="ChEBI" id="CHEBI:59789"/>
        <dbReference type="ChEBI" id="CHEBI:65315"/>
        <dbReference type="ChEBI" id="CHEBI:82930"/>
        <dbReference type="EC" id="2.5.1.25"/>
    </reaction>
</comment>
<comment type="subcellular location">
    <subcellularLocation>
        <location evidence="1">Nucleus</location>
    </subcellularLocation>
</comment>
<comment type="similarity">
    <text evidence="2">Belongs to the TDD superfamily. DTWD1 family.</text>
</comment>
<feature type="initiator methionine" description="Removed" evidence="1">
    <location>
        <position position="1"/>
    </location>
</feature>
<feature type="chain" id="PRO_0000308214" description="tRNA-uridine aminocarboxypropyltransferase 1">
    <location>
        <begin position="2"/>
        <end position="304"/>
    </location>
</feature>
<feature type="short sequence motif" description="DXTW">
    <location>
        <begin position="206"/>
        <end position="209"/>
    </location>
</feature>
<feature type="modified residue" description="N-acetylserine" evidence="1">
    <location>
        <position position="2"/>
    </location>
</feature>
<accession>Q5RCQ0</accession>
<sequence>MSLNPPIFLKRSEENNSKFVETKQSQTTSIASEDPLQNLCLASQEVLQKAQQSGRSKCLKCGGSRMFYCYTCYVPVENVPIEQIPLVKLPLKIDIIKHPNETDGKSTAIHAKLLAPEFVNIYTYPCIPEYEEKDHEVALVFPGPQSISIKDISFHLQKRIQNNVRGKNDDPDKPSFKRKRAEEQEFCDLNDSKCKGTTLKKIIFIDSTWNQTNKIFTDERLQGLLQVELKTRKTCFWRHQKGKPDTFLSTIEAIYYFLVDYHTDILKEKYRGQYDNLLFFYSFMYQLIKNAKCSGDKETGKLTH</sequence>
<proteinExistence type="evidence at transcript level"/>
<gene>
    <name evidence="1" type="primary">DTWD1</name>
</gene>
<keyword id="KW-0007">Acetylation</keyword>
<keyword id="KW-0539">Nucleus</keyword>
<keyword id="KW-1185">Reference proteome</keyword>
<keyword id="KW-0949">S-adenosyl-L-methionine</keyword>
<keyword id="KW-0808">Transferase</keyword>
<keyword id="KW-0819">tRNA processing</keyword>
<dbReference type="EC" id="2.5.1.25" evidence="1"/>
<dbReference type="EMBL" id="CR858219">
    <property type="protein sequence ID" value="CAH90457.1"/>
    <property type="molecule type" value="mRNA"/>
</dbReference>
<dbReference type="RefSeq" id="NP_001125235.1">
    <property type="nucleotide sequence ID" value="NM_001131763.1"/>
</dbReference>
<dbReference type="RefSeq" id="XP_009248090.1">
    <property type="nucleotide sequence ID" value="XM_009249815.4"/>
</dbReference>
<dbReference type="RefSeq" id="XP_009248091.1">
    <property type="nucleotide sequence ID" value="XM_009249816.1"/>
</dbReference>
<dbReference type="RefSeq" id="XP_063572080.1">
    <property type="nucleotide sequence ID" value="XM_063716010.1"/>
</dbReference>
<dbReference type="FunCoup" id="Q5RCQ0">
    <property type="interactions" value="1901"/>
</dbReference>
<dbReference type="STRING" id="9601.ENSPPYP00000007326"/>
<dbReference type="Ensembl" id="ENSPPYT00000007628.3">
    <property type="protein sequence ID" value="ENSPPYP00000007326.2"/>
    <property type="gene ID" value="ENSPPYG00000006464.3"/>
</dbReference>
<dbReference type="GeneID" id="100172129"/>
<dbReference type="KEGG" id="pon:100172129"/>
<dbReference type="CTD" id="56986"/>
<dbReference type="eggNOG" id="KOG3795">
    <property type="taxonomic scope" value="Eukaryota"/>
</dbReference>
<dbReference type="GeneTree" id="ENSGT00940000153766"/>
<dbReference type="HOGENOM" id="CLU_069451_0_1_1"/>
<dbReference type="InParanoid" id="Q5RCQ0"/>
<dbReference type="OMA" id="VNAWGLN"/>
<dbReference type="OrthoDB" id="3173at2759"/>
<dbReference type="TreeFam" id="TF324733"/>
<dbReference type="Proteomes" id="UP000001595">
    <property type="component" value="Chromosome 15"/>
</dbReference>
<dbReference type="GO" id="GO:0005634">
    <property type="term" value="C:nucleus"/>
    <property type="evidence" value="ECO:0000250"/>
    <property type="project" value="UniProtKB"/>
</dbReference>
<dbReference type="GO" id="GO:0016432">
    <property type="term" value="F:tRNA-uridine aminocarboxypropyltransferase activity"/>
    <property type="evidence" value="ECO:0000250"/>
    <property type="project" value="UniProtKB"/>
</dbReference>
<dbReference type="GO" id="GO:0006400">
    <property type="term" value="P:tRNA modification"/>
    <property type="evidence" value="ECO:0000250"/>
    <property type="project" value="UniProtKB"/>
</dbReference>
<dbReference type="InterPro" id="IPR005636">
    <property type="entry name" value="DTW"/>
</dbReference>
<dbReference type="InterPro" id="IPR051521">
    <property type="entry name" value="tRNA_Mod/Golgi_Maint"/>
</dbReference>
<dbReference type="PANTHER" id="PTHR15627">
    <property type="entry name" value="NATURAL KILLER CELL-SPECIFIC ANTIGEN KLIP1"/>
    <property type="match status" value="1"/>
</dbReference>
<dbReference type="PANTHER" id="PTHR15627:SF8">
    <property type="entry name" value="TRNA-URIDINE AMINOCARBOXYPROPYLTRANSFERASE 1"/>
    <property type="match status" value="1"/>
</dbReference>
<dbReference type="Pfam" id="PF03942">
    <property type="entry name" value="DTW"/>
    <property type="match status" value="1"/>
</dbReference>
<dbReference type="SMART" id="SM01144">
    <property type="entry name" value="DTW"/>
    <property type="match status" value="1"/>
</dbReference>
<protein>
    <recommendedName>
        <fullName evidence="2">tRNA-uridine aminocarboxypropyltransferase 1</fullName>
        <ecNumber evidence="1">2.5.1.25</ecNumber>
    </recommendedName>
    <alternativeName>
        <fullName evidence="2">DTW domain-containing protein 1</fullName>
    </alternativeName>
</protein>